<accession>B4LM71</accession>
<reference key="1">
    <citation type="journal article" date="2007" name="Nature">
        <title>Evolution of genes and genomes on the Drosophila phylogeny.</title>
        <authorList>
            <consortium name="Drosophila 12 genomes consortium"/>
        </authorList>
    </citation>
    <scope>NUCLEOTIDE SEQUENCE [LARGE SCALE GENOMIC DNA]</scope>
    <source>
        <strain>Tucson 15010-1051.87</strain>
    </source>
</reference>
<sequence>MAKKKSEEHSGADANDSDYTEEPNFDDPPNFVDNISDEDLLGDMLAQRPSEADGVESVVVVDNMPKVEPSRLEKLKSVINKLFSQCGEIVNVVYPVDEEGKTKGYAFMEYKTASQAEDAVKKLNNHRLDKNYTFAVNLFTDFQKYENIPEKWEPPTVQPFKVQSDLYNFINDPDAYDQYCVAAETAPNCVQVGFWQNTLPEPNELETRERFTDTFVKWSPLGTYVVTFHKPGVAIWGGSSFQKIQKFPHPGTQFVEFSPCENYLVTYGPTPTGQKIIIWDIRTGTEKRSFVGDGMSVLSMFRWSHDDKFVARMGENSIHIYETPSFYLLDLKSIKIPGIRGFSWSPTDNVIAYWVEEQNQIPARVTLMEIPKKRETRNKNLFHVADCKLHWQKSGDYLCVKVDRYSKLKKDKKELDVKFLGMFYNFEIFHMREKEIPVDSVEIRELILAFAWEPIGNKFSIIHGEPNSSNVSFYEVNKGVKPSLVKRLEKKSCTHLFWSPRGQFIVMANLTMGTFEFVDTTNDYIISASPDHFRASEVEWDPTGRYVVTGVSSWKVKEDTGFNMYTFQGRIIRRTILKNFVQFLWRPRPPTLLSEEKQKEIKKNLKKYYPVFEQKDRLRLTRASKELLEKRSQLRETFMEYRNKRIAEWKDQKSRRVMLRGHVDTDNLETDEVDEEVVEFLVKEEITLLE</sequence>
<feature type="chain" id="PRO_0000363803" description="Eukaryotic translation initiation factor 3 subunit B">
    <location>
        <begin position="1"/>
        <end position="690"/>
    </location>
</feature>
<feature type="domain" description="RRM" evidence="2">
    <location>
        <begin position="57"/>
        <end position="141"/>
    </location>
</feature>
<feature type="repeat" description="WD 1">
    <location>
        <begin position="207"/>
        <end position="246"/>
    </location>
</feature>
<feature type="repeat" description="WD 2">
    <location>
        <begin position="292"/>
        <end position="331"/>
    </location>
</feature>
<feature type="repeat" description="WD 3">
    <location>
        <begin position="334"/>
        <end position="369"/>
    </location>
</feature>
<feature type="repeat" description="WD 4">
    <location>
        <begin position="442"/>
        <end position="484"/>
    </location>
</feature>
<feature type="repeat" description="WD 5">
    <location>
        <begin position="530"/>
        <end position="575"/>
    </location>
</feature>
<feature type="region of interest" description="Disordered" evidence="3">
    <location>
        <begin position="1"/>
        <end position="36"/>
    </location>
</feature>
<feature type="coiled-coil region" evidence="2">
    <location>
        <begin position="614"/>
        <end position="645"/>
    </location>
</feature>
<feature type="compositionally biased region" description="Basic and acidic residues" evidence="3">
    <location>
        <begin position="1"/>
        <end position="11"/>
    </location>
</feature>
<feature type="compositionally biased region" description="Acidic residues" evidence="3">
    <location>
        <begin position="15"/>
        <end position="25"/>
    </location>
</feature>
<keyword id="KW-0175">Coiled coil</keyword>
<keyword id="KW-0963">Cytoplasm</keyword>
<keyword id="KW-0396">Initiation factor</keyword>
<keyword id="KW-0648">Protein biosynthesis</keyword>
<keyword id="KW-1185">Reference proteome</keyword>
<keyword id="KW-0677">Repeat</keyword>
<keyword id="KW-0694">RNA-binding</keyword>
<keyword id="KW-0853">WD repeat</keyword>
<organism>
    <name type="scientific">Drosophila virilis</name>
    <name type="common">Fruit fly</name>
    <dbReference type="NCBI Taxonomy" id="7244"/>
    <lineage>
        <taxon>Eukaryota</taxon>
        <taxon>Metazoa</taxon>
        <taxon>Ecdysozoa</taxon>
        <taxon>Arthropoda</taxon>
        <taxon>Hexapoda</taxon>
        <taxon>Insecta</taxon>
        <taxon>Pterygota</taxon>
        <taxon>Neoptera</taxon>
        <taxon>Endopterygota</taxon>
        <taxon>Diptera</taxon>
        <taxon>Brachycera</taxon>
        <taxon>Muscomorpha</taxon>
        <taxon>Ephydroidea</taxon>
        <taxon>Drosophilidae</taxon>
        <taxon>Drosophila</taxon>
    </lineage>
</organism>
<evidence type="ECO:0000250" key="1">
    <source>
        <dbReference type="UniProtKB" id="Q0E940"/>
    </source>
</evidence>
<evidence type="ECO:0000255" key="2">
    <source>
        <dbReference type="HAMAP-Rule" id="MF_03001"/>
    </source>
</evidence>
<evidence type="ECO:0000256" key="3">
    <source>
        <dbReference type="SAM" id="MobiDB-lite"/>
    </source>
</evidence>
<gene>
    <name evidence="2" type="primary">eIF3b</name>
    <name evidence="2" type="synonym">eIF3-S9</name>
    <name type="ORF">GJ20575</name>
</gene>
<comment type="function">
    <text evidence="2">RNA-binding component of the eukaryotic translation initiation factor 3 (eIF-3) complex, which is involved in protein synthesis of a specialized repertoire of mRNAs and, together with other initiation factors, stimulates binding of mRNA and methionyl-tRNAi to the 40S ribosome. The eIF-3 complex specifically targets and initiates translation of a subset of mRNAs involved in cell proliferation.</text>
</comment>
<comment type="subunit">
    <text evidence="1 2">Component of the eukaryotic translation initiation factor 3 (eIF-3) complex. The eIF-3 complex interacts with pix. Interacts with mxt (By similarity).</text>
</comment>
<comment type="subcellular location">
    <subcellularLocation>
        <location evidence="2">Cytoplasm</location>
    </subcellularLocation>
</comment>
<comment type="similarity">
    <text evidence="2">Belongs to the eIF-3 subunit B family.</text>
</comment>
<dbReference type="EMBL" id="CH940648">
    <property type="protein sequence ID" value="EDW60949.1"/>
    <property type="molecule type" value="Genomic_DNA"/>
</dbReference>
<dbReference type="RefSeq" id="XP_002049756.1">
    <property type="nucleotide sequence ID" value="XM_002049720.4"/>
</dbReference>
<dbReference type="SMR" id="B4LM71"/>
<dbReference type="FunCoup" id="B4LM71">
    <property type="interactions" value="2633"/>
</dbReference>
<dbReference type="STRING" id="7244.B4LM71"/>
<dbReference type="EnsemblMetazoa" id="FBtr0236500">
    <property type="protein sequence ID" value="FBpp0234992"/>
    <property type="gene ID" value="FBgn0207714"/>
</dbReference>
<dbReference type="EnsemblMetazoa" id="XM_002049720.3">
    <property type="protein sequence ID" value="XP_002049756.1"/>
    <property type="gene ID" value="LOC6624762"/>
</dbReference>
<dbReference type="GeneID" id="6624762"/>
<dbReference type="KEGG" id="dvi:6624762"/>
<dbReference type="CTD" id="8662"/>
<dbReference type="eggNOG" id="KOG2314">
    <property type="taxonomic scope" value="Eukaryota"/>
</dbReference>
<dbReference type="HOGENOM" id="CLU_011152_1_0_1"/>
<dbReference type="InParanoid" id="B4LM71"/>
<dbReference type="OMA" id="LWGGPQF"/>
<dbReference type="OrthoDB" id="10250414at2759"/>
<dbReference type="PhylomeDB" id="B4LM71"/>
<dbReference type="Proteomes" id="UP000008792">
    <property type="component" value="Unassembled WGS sequence"/>
</dbReference>
<dbReference type="GO" id="GO:0016282">
    <property type="term" value="C:eukaryotic 43S preinitiation complex"/>
    <property type="evidence" value="ECO:0007669"/>
    <property type="project" value="UniProtKB-UniRule"/>
</dbReference>
<dbReference type="GO" id="GO:0033290">
    <property type="term" value="C:eukaryotic 48S preinitiation complex"/>
    <property type="evidence" value="ECO:0007669"/>
    <property type="project" value="UniProtKB-UniRule"/>
</dbReference>
<dbReference type="GO" id="GO:0005852">
    <property type="term" value="C:eukaryotic translation initiation factor 3 complex"/>
    <property type="evidence" value="ECO:0000250"/>
    <property type="project" value="UniProtKB"/>
</dbReference>
<dbReference type="GO" id="GO:0003723">
    <property type="term" value="F:RNA binding"/>
    <property type="evidence" value="ECO:0007669"/>
    <property type="project" value="UniProtKB-UniRule"/>
</dbReference>
<dbReference type="GO" id="GO:0003743">
    <property type="term" value="F:translation initiation factor activity"/>
    <property type="evidence" value="ECO:0000250"/>
    <property type="project" value="UniProtKB"/>
</dbReference>
<dbReference type="GO" id="GO:0031369">
    <property type="term" value="F:translation initiation factor binding"/>
    <property type="evidence" value="ECO:0007669"/>
    <property type="project" value="InterPro"/>
</dbReference>
<dbReference type="GO" id="GO:0030707">
    <property type="term" value="P:follicle cell of egg chamber development"/>
    <property type="evidence" value="ECO:0007669"/>
    <property type="project" value="EnsemblMetazoa"/>
</dbReference>
<dbReference type="GO" id="GO:0001732">
    <property type="term" value="P:formation of cytoplasmic translation initiation complex"/>
    <property type="evidence" value="ECO:0007669"/>
    <property type="project" value="UniProtKB-UniRule"/>
</dbReference>
<dbReference type="GO" id="GO:0006446">
    <property type="term" value="P:regulation of translational initiation"/>
    <property type="evidence" value="ECO:0000250"/>
    <property type="project" value="UniProtKB"/>
</dbReference>
<dbReference type="CDD" id="cd12278">
    <property type="entry name" value="RRM_eIF3B"/>
    <property type="match status" value="1"/>
</dbReference>
<dbReference type="FunFam" id="2.130.10.10:FF:000884">
    <property type="entry name" value="Eukaryotic translation initiation factor 3 subunit B"/>
    <property type="match status" value="1"/>
</dbReference>
<dbReference type="FunFam" id="3.30.70.330:FF:000607">
    <property type="entry name" value="Eukaryotic translation initiation factor 3 subunit B"/>
    <property type="match status" value="1"/>
</dbReference>
<dbReference type="Gene3D" id="3.30.70.330">
    <property type="match status" value="1"/>
</dbReference>
<dbReference type="Gene3D" id="2.130.10.10">
    <property type="entry name" value="YVTN repeat-like/Quinoprotein amine dehydrogenase"/>
    <property type="match status" value="1"/>
</dbReference>
<dbReference type="HAMAP" id="MF_03001">
    <property type="entry name" value="eIF3b"/>
    <property type="match status" value="1"/>
</dbReference>
<dbReference type="InterPro" id="IPR011400">
    <property type="entry name" value="EIF3B"/>
</dbReference>
<dbReference type="InterPro" id="IPR034363">
    <property type="entry name" value="eIF3B_RRM"/>
</dbReference>
<dbReference type="InterPro" id="IPR012677">
    <property type="entry name" value="Nucleotide-bd_a/b_plait_sf"/>
</dbReference>
<dbReference type="InterPro" id="IPR035979">
    <property type="entry name" value="RBD_domain_sf"/>
</dbReference>
<dbReference type="InterPro" id="IPR000504">
    <property type="entry name" value="RRM_dom"/>
</dbReference>
<dbReference type="InterPro" id="IPR013979">
    <property type="entry name" value="TIF_beta_prop-like"/>
</dbReference>
<dbReference type="InterPro" id="IPR015943">
    <property type="entry name" value="WD40/YVTN_repeat-like_dom_sf"/>
</dbReference>
<dbReference type="PANTHER" id="PTHR14068">
    <property type="entry name" value="EUKARYOTIC TRANSLATION INITIATION FACTOR 3 EIF3 -RELATED"/>
    <property type="match status" value="1"/>
</dbReference>
<dbReference type="PANTHER" id="PTHR14068:SF0">
    <property type="entry name" value="EUKARYOTIC TRANSLATION INITIATION FACTOR 3 SUBUNIT B"/>
    <property type="match status" value="1"/>
</dbReference>
<dbReference type="Pfam" id="PF08662">
    <property type="entry name" value="eIF2A"/>
    <property type="match status" value="1"/>
</dbReference>
<dbReference type="Pfam" id="PF00076">
    <property type="entry name" value="RRM_1"/>
    <property type="match status" value="1"/>
</dbReference>
<dbReference type="PIRSF" id="PIRSF036424">
    <property type="entry name" value="eIF3b"/>
    <property type="match status" value="1"/>
</dbReference>
<dbReference type="SMART" id="SM00360">
    <property type="entry name" value="RRM"/>
    <property type="match status" value="1"/>
</dbReference>
<dbReference type="SUPFAM" id="SSF82171">
    <property type="entry name" value="DPP6 N-terminal domain-like"/>
    <property type="match status" value="1"/>
</dbReference>
<dbReference type="SUPFAM" id="SSF54928">
    <property type="entry name" value="RNA-binding domain, RBD"/>
    <property type="match status" value="1"/>
</dbReference>
<dbReference type="PROSITE" id="PS50102">
    <property type="entry name" value="RRM"/>
    <property type="match status" value="1"/>
</dbReference>
<name>EIF3B_DROVI</name>
<proteinExistence type="inferred from homology"/>
<protein>
    <recommendedName>
        <fullName evidence="2">Eukaryotic translation initiation factor 3 subunit B</fullName>
        <shortName evidence="2">eIF3b</shortName>
    </recommendedName>
    <alternativeName>
        <fullName evidence="2">Eukaryotic translation initiation factor 3 subunit 9</fullName>
    </alternativeName>
</protein>